<feature type="peptide" id="PRO_0000043425" description="Adipokinetic hormone">
    <location>
        <begin position="1"/>
        <end position="8"/>
    </location>
</feature>
<feature type="modified residue" description="Pyrrolidone carboxylic acid" evidence="1">
    <location>
        <position position="1"/>
    </location>
</feature>
<feature type="modified residue" description="Tryptophan amide" evidence="1">
    <location>
        <position position="8"/>
    </location>
</feature>
<sequence>QLTFTPGW</sequence>
<evidence type="ECO:0000269" key="1">
    <source>
    </source>
</evidence>
<evidence type="ECO:0000305" key="2"/>
<organism>
    <name type="scientific">Tabanus atratus</name>
    <name type="common">Black horse fly</name>
    <dbReference type="NCBI Taxonomy" id="7207"/>
    <lineage>
        <taxon>Eukaryota</taxon>
        <taxon>Metazoa</taxon>
        <taxon>Ecdysozoa</taxon>
        <taxon>Arthropoda</taxon>
        <taxon>Hexapoda</taxon>
        <taxon>Insecta</taxon>
        <taxon>Pterygota</taxon>
        <taxon>Neoptera</taxon>
        <taxon>Endopterygota</taxon>
        <taxon>Diptera</taxon>
        <taxon>Brachycera</taxon>
        <taxon>Tabanomorpha</taxon>
        <taxon>Tabanoidea</taxon>
        <taxon>Tabanidae</taxon>
        <taxon>Tabanus</taxon>
    </lineage>
</organism>
<dbReference type="PIR" id="A33995">
    <property type="entry name" value="A33995"/>
</dbReference>
<dbReference type="GO" id="GO:0005576">
    <property type="term" value="C:extracellular region"/>
    <property type="evidence" value="ECO:0007669"/>
    <property type="project" value="UniProtKB-SubCell"/>
</dbReference>
<dbReference type="GO" id="GO:0005179">
    <property type="term" value="F:hormone activity"/>
    <property type="evidence" value="ECO:0007669"/>
    <property type="project" value="UniProtKB-KW"/>
</dbReference>
<dbReference type="GO" id="GO:0007629">
    <property type="term" value="P:flight behavior"/>
    <property type="evidence" value="ECO:0007669"/>
    <property type="project" value="UniProtKB-KW"/>
</dbReference>
<dbReference type="GO" id="GO:0007218">
    <property type="term" value="P:neuropeptide signaling pathway"/>
    <property type="evidence" value="ECO:0007669"/>
    <property type="project" value="UniProtKB-KW"/>
</dbReference>
<dbReference type="InterPro" id="IPR002047">
    <property type="entry name" value="Adipokinetic_hormone_CS"/>
</dbReference>
<dbReference type="PROSITE" id="PS00256">
    <property type="entry name" value="AKH"/>
    <property type="match status" value="1"/>
</dbReference>
<protein>
    <recommendedName>
        <fullName>Adipokinetic hormone</fullName>
        <shortName>AKH</shortName>
    </recommendedName>
    <alternativeName>
        <fullName>Dipteran corpora cardiaca factor I</fullName>
        <shortName>DCC I</shortName>
    </alternativeName>
</protein>
<name>AKH_TABAT</name>
<accession>P14595</accession>
<comment type="function">
    <text>This hormone, released from cells in the corpora cardiaca, causes release of diglycerides from the fat body and stimulation of muscles to use these diglycerides as an energy source during energy-demanding processes.</text>
</comment>
<comment type="subcellular location">
    <subcellularLocation>
        <location>Secreted</location>
    </subcellularLocation>
</comment>
<comment type="similarity">
    <text evidence="2">Belongs to the AKH/HRTH/RPCH family.</text>
</comment>
<keyword id="KW-0027">Amidation</keyword>
<keyword id="KW-0903">Direct protein sequencing</keyword>
<keyword id="KW-0286">Flight</keyword>
<keyword id="KW-0372">Hormone</keyword>
<keyword id="KW-0527">Neuropeptide</keyword>
<keyword id="KW-0873">Pyrrolidone carboxylic acid</keyword>
<keyword id="KW-0964">Secreted</keyword>
<reference key="1">
    <citation type="journal article" date="1989" name="Proc. Natl. Acad. Sci. U.S.A.">
        <title>Primary structure of two neuropeptide hormones with adipokinetic and hypotrehalosemic activity isolated from the corpora cardiaca of horse flies (Diptera).</title>
        <authorList>
            <person name="Jaffe H."/>
            <person name="Raina A.K."/>
            <person name="Riley C.T."/>
            <person name="Fraser B.A."/>
            <person name="Nachman R.J."/>
            <person name="Vogel V.W."/>
            <person name="Zhang Y.-S."/>
            <person name="Hayes D.K."/>
        </authorList>
    </citation>
    <scope>PROTEIN SEQUENCE</scope>
    <scope>PYROGLUTAMATE FORMATION AT GLN-1</scope>
    <scope>AMIDATION AT TRP-8</scope>
    <source>
        <tissue>Corpora cardiaca</tissue>
    </source>
</reference>
<proteinExistence type="evidence at protein level"/>